<proteinExistence type="inferred from homology"/>
<protein>
    <recommendedName>
        <fullName evidence="1">Protein-L-isoaspartate O-methyltransferase</fullName>
        <ecNumber evidence="1">2.1.1.77</ecNumber>
    </recommendedName>
    <alternativeName>
        <fullName evidence="1">L-isoaspartyl protein carboxyl methyltransferase</fullName>
    </alternativeName>
    <alternativeName>
        <fullName evidence="1">Protein L-isoaspartyl methyltransferase</fullName>
    </alternativeName>
    <alternativeName>
        <fullName evidence="1">Protein-beta-aspartate methyltransferase</fullName>
        <shortName evidence="1">PIMT</shortName>
    </alternativeName>
</protein>
<reference key="1">
    <citation type="journal article" date="2004" name="Proc. Natl. Acad. Sci. U.S.A.">
        <title>Insights into the evolution of Yersinia pestis through whole-genome comparison with Yersinia pseudotuberculosis.</title>
        <authorList>
            <person name="Chain P.S.G."/>
            <person name="Carniel E."/>
            <person name="Larimer F.W."/>
            <person name="Lamerdin J."/>
            <person name="Stoutland P.O."/>
            <person name="Regala W.M."/>
            <person name="Georgescu A.M."/>
            <person name="Vergez L.M."/>
            <person name="Land M.L."/>
            <person name="Motin V.L."/>
            <person name="Brubaker R.R."/>
            <person name="Fowler J."/>
            <person name="Hinnebusch J."/>
            <person name="Marceau M."/>
            <person name="Medigue C."/>
            <person name="Simonet M."/>
            <person name="Chenal-Francisque V."/>
            <person name="Souza B."/>
            <person name="Dacheux D."/>
            <person name="Elliott J.M."/>
            <person name="Derbise A."/>
            <person name="Hauser L.J."/>
            <person name="Garcia E."/>
        </authorList>
    </citation>
    <scope>NUCLEOTIDE SEQUENCE [LARGE SCALE GENOMIC DNA]</scope>
    <source>
        <strain>IP32953</strain>
    </source>
</reference>
<sequence length="208" mass="23432">MVNKRMQTLLMQLRQQGIHDERLLQAIEAVPRERFVDEALAHKAYENTALPIGAGQTISQPYMVARMTELLQLTPTSRVLEIGTGSGYQTAILAHLVDHVCSVERIKGLQWQAKRRLKQLDLHNVSTRHGDGWLGWQSRGPFDAIIVTAAPPEIPDALLEQLDEGGILVLPVGEQFQTLKYVQRRNNEYHIETVEAVRFVPLVKGELA</sequence>
<comment type="function">
    <text evidence="1">Catalyzes the methyl esterification of L-isoaspartyl residues in peptides and proteins that result from spontaneous decomposition of normal L-aspartyl and L-asparaginyl residues. It plays a role in the repair and/or degradation of damaged proteins.</text>
</comment>
<comment type="catalytic activity">
    <reaction evidence="1">
        <text>[protein]-L-isoaspartate + S-adenosyl-L-methionine = [protein]-L-isoaspartate alpha-methyl ester + S-adenosyl-L-homocysteine</text>
        <dbReference type="Rhea" id="RHEA:12705"/>
        <dbReference type="Rhea" id="RHEA-COMP:12143"/>
        <dbReference type="Rhea" id="RHEA-COMP:12144"/>
        <dbReference type="ChEBI" id="CHEBI:57856"/>
        <dbReference type="ChEBI" id="CHEBI:59789"/>
        <dbReference type="ChEBI" id="CHEBI:90596"/>
        <dbReference type="ChEBI" id="CHEBI:90598"/>
        <dbReference type="EC" id="2.1.1.77"/>
    </reaction>
</comment>
<comment type="subcellular location">
    <subcellularLocation>
        <location evidence="1">Cytoplasm</location>
    </subcellularLocation>
</comment>
<comment type="similarity">
    <text evidence="1">Belongs to the methyltransferase superfamily. L-isoaspartyl/D-aspartyl protein methyltransferase family.</text>
</comment>
<gene>
    <name evidence="1" type="primary">pcm</name>
    <name type="ordered locus">YPTB0774</name>
</gene>
<accession>Q66EB9</accession>
<name>PIMT_YERPS</name>
<organism>
    <name type="scientific">Yersinia pseudotuberculosis serotype I (strain IP32953)</name>
    <dbReference type="NCBI Taxonomy" id="273123"/>
    <lineage>
        <taxon>Bacteria</taxon>
        <taxon>Pseudomonadati</taxon>
        <taxon>Pseudomonadota</taxon>
        <taxon>Gammaproteobacteria</taxon>
        <taxon>Enterobacterales</taxon>
        <taxon>Yersiniaceae</taxon>
        <taxon>Yersinia</taxon>
    </lineage>
</organism>
<dbReference type="EC" id="2.1.1.77" evidence="1"/>
<dbReference type="EMBL" id="BX936398">
    <property type="protein sequence ID" value="CAH20014.1"/>
    <property type="molecule type" value="Genomic_DNA"/>
</dbReference>
<dbReference type="RefSeq" id="WP_002209395.1">
    <property type="nucleotide sequence ID" value="NZ_CP009712.1"/>
</dbReference>
<dbReference type="SMR" id="Q66EB9"/>
<dbReference type="KEGG" id="ypo:BZ17_1782"/>
<dbReference type="KEGG" id="yps:YPTB0774"/>
<dbReference type="PATRIC" id="fig|273123.14.peg.1887"/>
<dbReference type="Proteomes" id="UP000001011">
    <property type="component" value="Chromosome"/>
</dbReference>
<dbReference type="GO" id="GO:0005737">
    <property type="term" value="C:cytoplasm"/>
    <property type="evidence" value="ECO:0007669"/>
    <property type="project" value="UniProtKB-SubCell"/>
</dbReference>
<dbReference type="GO" id="GO:0004719">
    <property type="term" value="F:protein-L-isoaspartate (D-aspartate) O-methyltransferase activity"/>
    <property type="evidence" value="ECO:0007669"/>
    <property type="project" value="UniProtKB-UniRule"/>
</dbReference>
<dbReference type="GO" id="GO:0032259">
    <property type="term" value="P:methylation"/>
    <property type="evidence" value="ECO:0007669"/>
    <property type="project" value="UniProtKB-KW"/>
</dbReference>
<dbReference type="GO" id="GO:0036211">
    <property type="term" value="P:protein modification process"/>
    <property type="evidence" value="ECO:0007669"/>
    <property type="project" value="UniProtKB-UniRule"/>
</dbReference>
<dbReference type="GO" id="GO:0030091">
    <property type="term" value="P:protein repair"/>
    <property type="evidence" value="ECO:0007669"/>
    <property type="project" value="UniProtKB-UniRule"/>
</dbReference>
<dbReference type="CDD" id="cd02440">
    <property type="entry name" value="AdoMet_MTases"/>
    <property type="match status" value="1"/>
</dbReference>
<dbReference type="FunFam" id="3.40.50.150:FF:000010">
    <property type="entry name" value="Protein-L-isoaspartate O-methyltransferase"/>
    <property type="match status" value="1"/>
</dbReference>
<dbReference type="Gene3D" id="3.40.50.150">
    <property type="entry name" value="Vaccinia Virus protein VP39"/>
    <property type="match status" value="1"/>
</dbReference>
<dbReference type="HAMAP" id="MF_00090">
    <property type="entry name" value="PIMT"/>
    <property type="match status" value="1"/>
</dbReference>
<dbReference type="InterPro" id="IPR000682">
    <property type="entry name" value="PCMT"/>
</dbReference>
<dbReference type="InterPro" id="IPR029063">
    <property type="entry name" value="SAM-dependent_MTases_sf"/>
</dbReference>
<dbReference type="NCBIfam" id="TIGR00080">
    <property type="entry name" value="pimt"/>
    <property type="match status" value="1"/>
</dbReference>
<dbReference type="NCBIfam" id="NF001453">
    <property type="entry name" value="PRK00312.1"/>
    <property type="match status" value="1"/>
</dbReference>
<dbReference type="PANTHER" id="PTHR11579">
    <property type="entry name" value="PROTEIN-L-ISOASPARTATE O-METHYLTRANSFERASE"/>
    <property type="match status" value="1"/>
</dbReference>
<dbReference type="PANTHER" id="PTHR11579:SF0">
    <property type="entry name" value="PROTEIN-L-ISOASPARTATE(D-ASPARTATE) O-METHYLTRANSFERASE"/>
    <property type="match status" value="1"/>
</dbReference>
<dbReference type="Pfam" id="PF01135">
    <property type="entry name" value="PCMT"/>
    <property type="match status" value="1"/>
</dbReference>
<dbReference type="SUPFAM" id="SSF53335">
    <property type="entry name" value="S-adenosyl-L-methionine-dependent methyltransferases"/>
    <property type="match status" value="1"/>
</dbReference>
<dbReference type="PROSITE" id="PS01279">
    <property type="entry name" value="PCMT"/>
    <property type="match status" value="1"/>
</dbReference>
<feature type="chain" id="PRO_1000004835" description="Protein-L-isoaspartate O-methyltransferase">
    <location>
        <begin position="1"/>
        <end position="208"/>
    </location>
</feature>
<feature type="active site" evidence="1">
    <location>
        <position position="59"/>
    </location>
</feature>
<keyword id="KW-0963">Cytoplasm</keyword>
<keyword id="KW-0489">Methyltransferase</keyword>
<keyword id="KW-0949">S-adenosyl-L-methionine</keyword>
<keyword id="KW-0808">Transferase</keyword>
<evidence type="ECO:0000255" key="1">
    <source>
        <dbReference type="HAMAP-Rule" id="MF_00090"/>
    </source>
</evidence>